<evidence type="ECO:0000250" key="1">
    <source>
        <dbReference type="UniProtKB" id="P26769"/>
    </source>
</evidence>
<evidence type="ECO:0000250" key="2">
    <source>
        <dbReference type="UniProtKB" id="P30803"/>
    </source>
</evidence>
<evidence type="ECO:0000250" key="3">
    <source>
        <dbReference type="UniProtKB" id="P30804"/>
    </source>
</evidence>
<evidence type="ECO:0000250" key="4">
    <source>
        <dbReference type="UniProtKB" id="Q01341"/>
    </source>
</evidence>
<evidence type="ECO:0000250" key="5">
    <source>
        <dbReference type="UniProtKB" id="Q03343"/>
    </source>
</evidence>
<evidence type="ECO:0000255" key="6"/>
<evidence type="ECO:0000255" key="7">
    <source>
        <dbReference type="PROSITE-ProRule" id="PRU00099"/>
    </source>
</evidence>
<evidence type="ECO:0000269" key="8">
    <source>
    </source>
</evidence>
<evidence type="ECO:0000269" key="9">
    <source>
    </source>
</evidence>
<evidence type="ECO:0000269" key="10">
    <source>
    </source>
</evidence>
<evidence type="ECO:0000269" key="11">
    <source>
    </source>
</evidence>
<evidence type="ECO:0000269" key="12">
    <source>
    </source>
</evidence>
<evidence type="ECO:0000303" key="13">
    <source>
    </source>
</evidence>
<evidence type="ECO:0000303" key="14">
    <source>
    </source>
</evidence>
<evidence type="ECO:0000305" key="15"/>
<evidence type="ECO:0007744" key="16">
    <source>
    </source>
</evidence>
<evidence type="ECO:0007744" key="17">
    <source>
    </source>
</evidence>
<keyword id="KW-0025">Alternative splicing</keyword>
<keyword id="KW-0067">ATP-binding</keyword>
<keyword id="KW-0115">cAMP biosynthesis</keyword>
<keyword id="KW-1003">Cell membrane</keyword>
<keyword id="KW-0966">Cell projection</keyword>
<keyword id="KW-0969">Cilium</keyword>
<keyword id="KW-0225">Disease variant</keyword>
<keyword id="KW-0325">Glycoprotein</keyword>
<keyword id="KW-0456">Lyase</keyword>
<keyword id="KW-0460">Magnesium</keyword>
<keyword id="KW-0464">Manganese</keyword>
<keyword id="KW-0472">Membrane</keyword>
<keyword id="KW-0479">Metal-binding</keyword>
<keyword id="KW-0547">Nucleotide-binding</keyword>
<keyword id="KW-0597">Phosphoprotein</keyword>
<keyword id="KW-1267">Proteomics identification</keyword>
<keyword id="KW-1185">Reference proteome</keyword>
<keyword id="KW-0677">Repeat</keyword>
<keyword id="KW-0812">Transmembrane</keyword>
<keyword id="KW-1133">Transmembrane helix</keyword>
<accession>O43306</accession>
<accession>Q9NR75</accession>
<accession>Q9UDB0</accession>
<proteinExistence type="evidence at protein level"/>
<gene>
    <name type="primary">ADCY6</name>
    <name type="synonym">KIAA0422</name>
</gene>
<reference key="1">
    <citation type="journal article" date="2000" name="Biochim. Biophys. Acta">
        <title>Cloning and expression of human adenylyl cyclase type VI in normal thyroid tissues.</title>
        <authorList>
            <person name="Wicker R."/>
            <person name="Catalan A.G."/>
            <person name="Cailleux A.-F."/>
            <person name="Starenki D."/>
            <person name="Stengel D."/>
            <person name="Sarasin A."/>
            <person name="Suarez H.G."/>
        </authorList>
    </citation>
    <scope>NUCLEOTIDE SEQUENCE [MRNA] (ISOFORM 1)</scope>
    <scope>TISSUE SPECIFICITY</scope>
    <source>
        <tissue>Thyroid</tissue>
    </source>
</reference>
<reference key="2">
    <citation type="journal article" date="1997" name="DNA Res.">
        <title>Prediction of the coding sequences of unidentified human genes. VIII. 78 new cDNA clones from brain which code for large proteins in vitro.</title>
        <authorList>
            <person name="Ishikawa K."/>
            <person name="Nagase T."/>
            <person name="Nakajima D."/>
            <person name="Seki N."/>
            <person name="Ohira M."/>
            <person name="Miyajima N."/>
            <person name="Tanaka A."/>
            <person name="Kotani H."/>
            <person name="Nomura N."/>
            <person name="Ohara O."/>
        </authorList>
    </citation>
    <scope>NUCLEOTIDE SEQUENCE [LARGE SCALE MRNA] (ISOFORM 2)</scope>
    <source>
        <tissue>Brain</tissue>
    </source>
</reference>
<reference key="3">
    <citation type="journal article" date="2002" name="DNA Res.">
        <title>Construction of expression-ready cDNA clones for KIAA genes: manual curation of 330 KIAA cDNA clones.</title>
        <authorList>
            <person name="Nakajima D."/>
            <person name="Okazaki N."/>
            <person name="Yamakawa H."/>
            <person name="Kikuno R."/>
            <person name="Ohara O."/>
            <person name="Nagase T."/>
        </authorList>
    </citation>
    <scope>SEQUENCE REVISION</scope>
</reference>
<reference key="4">
    <citation type="journal article" date="2004" name="Genome Res.">
        <title>The status, quality, and expansion of the NIH full-length cDNA project: the Mammalian Gene Collection (MGC).</title>
        <authorList>
            <consortium name="The MGC Project Team"/>
        </authorList>
    </citation>
    <scope>NUCLEOTIDE SEQUENCE [LARGE SCALE MRNA] (ISOFORM 1)</scope>
    <source>
        <tissue>Retina</tissue>
    </source>
</reference>
<reference key="5">
    <citation type="journal article" date="1993" name="Biochem. Biophys. Res. Commun.">
        <title>A novel adenylyl cyclase sequence cloned from the human erythroleukemia cell line.</title>
        <authorList>
            <person name="Hellevuo K."/>
            <person name="Yoshimura M."/>
            <person name="Kao M."/>
            <person name="Hoffman P.L."/>
            <person name="Cooper D.M.F."/>
            <person name="Tabakoff B."/>
        </authorList>
    </citation>
    <scope>NUCLEOTIDE SEQUENCE [MRNA] OF 1040-1103</scope>
</reference>
<reference key="6">
    <citation type="journal article" date="2004" name="Mol. Pharmacol.">
        <title>Raf kinase activation of adenylyl cyclases: isoform-selective regulation.</title>
        <authorList>
            <person name="Ding Q."/>
            <person name="Gros R."/>
            <person name="Gray I.D."/>
            <person name="Taussig R."/>
            <person name="Ferguson S.S."/>
            <person name="Feldman R.D."/>
        </authorList>
    </citation>
    <scope>INTERACTION WITH RAF1</scope>
</reference>
<reference key="7">
    <citation type="journal article" date="2008" name="J. Proteome Res.">
        <title>Phosphoproteome of resting human platelets.</title>
        <authorList>
            <person name="Zahedi R.P."/>
            <person name="Lewandrowski U."/>
            <person name="Wiesner J."/>
            <person name="Wortelkamp S."/>
            <person name="Moebius J."/>
            <person name="Schuetz C."/>
            <person name="Walter U."/>
            <person name="Gambaryan S."/>
            <person name="Sickmann A."/>
        </authorList>
    </citation>
    <scope>PHOSPHORYLATION [LARGE SCALE ANALYSIS] AT SER-576</scope>
    <scope>IDENTIFICATION BY MASS SPECTROMETRY [LARGE SCALE ANALYSIS]</scope>
    <source>
        <tissue>Platelet</tissue>
    </source>
</reference>
<reference key="8">
    <citation type="journal article" date="2008" name="Proc. Natl. Acad. Sci. U.S.A.">
        <title>A quantitative atlas of mitotic phosphorylation.</title>
        <authorList>
            <person name="Dephoure N."/>
            <person name="Zhou C."/>
            <person name="Villen J."/>
            <person name="Beausoleil S.A."/>
            <person name="Bakalarski C.E."/>
            <person name="Elledge S.J."/>
            <person name="Gygi S.P."/>
        </authorList>
    </citation>
    <scope>IDENTIFICATION BY MASS SPECTROMETRY [LARGE SCALE ANALYSIS]</scope>
    <source>
        <tissue>Cervix carcinoma</tissue>
    </source>
</reference>
<reference key="9">
    <citation type="journal article" date="2013" name="J. Proteome Res.">
        <title>Toward a comprehensive characterization of a human cancer cell phosphoproteome.</title>
        <authorList>
            <person name="Zhou H."/>
            <person name="Di Palma S."/>
            <person name="Preisinger C."/>
            <person name="Peng M."/>
            <person name="Polat A.N."/>
            <person name="Heck A.J."/>
            <person name="Mohammed S."/>
        </authorList>
    </citation>
    <scope>PHOSPHORYLATION [LARGE SCALE ANALYSIS] AT SER-54 AND SER-576</scope>
    <scope>IDENTIFICATION BY MASS SPECTROMETRY [LARGE SCALE ANALYSIS]</scope>
    <source>
        <tissue>Cervix carcinoma</tissue>
    </source>
</reference>
<reference key="10">
    <citation type="journal article" date="2014" name="J. Proteomics">
        <title>An enzyme assisted RP-RPLC approach for in-depth analysis of human liver phosphoproteome.</title>
        <authorList>
            <person name="Bian Y."/>
            <person name="Song C."/>
            <person name="Cheng K."/>
            <person name="Dong M."/>
            <person name="Wang F."/>
            <person name="Huang J."/>
            <person name="Sun D."/>
            <person name="Wang L."/>
            <person name="Ye M."/>
            <person name="Zou H."/>
        </authorList>
    </citation>
    <scope>IDENTIFICATION BY MASS SPECTROMETRY [LARGE SCALE ANALYSIS]</scope>
    <source>
        <tissue>Liver</tissue>
    </source>
</reference>
<reference key="11">
    <citation type="journal article" date="2007" name="Arterioscler. Thromb. Vasc. Biol.">
        <title>Increased enzyme activity and beta-adrenergic mediated vasodilation in subjects expressing a single-nucleotide variant of human adenylyl cyclase 6.</title>
        <authorList>
            <person name="Gros R."/>
            <person name="Van Uum S."/>
            <person name="Hutchinson-Jaffe A."/>
            <person name="Ding Q."/>
            <person name="Pickering J.G."/>
            <person name="Hegele R.A."/>
            <person name="Feldman R.D."/>
        </authorList>
    </citation>
    <scope>VARIANT SER-674</scope>
    <scope>CHARACTERIZATION OF VARIANT SER-674</scope>
    <scope>CATALYTIC ACTIVITY</scope>
    <scope>ACTIVITY REGULATION</scope>
    <scope>FUNCTION</scope>
    <scope>TISSUE SPECIFICITY</scope>
</reference>
<reference key="12">
    <citation type="journal article" date="2007" name="J. Biol. Chem.">
        <title>Conditional stimulation of type V and VI adenylyl cyclases by G protein betagamma subunits.</title>
        <authorList>
            <person name="Gao X."/>
            <person name="Sadana R."/>
            <person name="Dessauer C.W."/>
            <person name="Patel T.B."/>
        </authorList>
    </citation>
    <scope>FUNCTION</scope>
    <scope>CATALYTIC ACTIVITY</scope>
    <scope>ACTIVITY REGULATION</scope>
    <scope>SUBCELLULAR LOCATION</scope>
    <scope>INTERACTION WITH GNAS; GNB1 AND GNG2</scope>
</reference>
<reference key="13">
    <citation type="journal article" date="2014" name="Hum. Mol. Genet.">
        <title>Mutations in CNTNAP1 and ADCY6 are responsible for severe arthrogryposis multiplex congenita with axoglial defects.</title>
        <authorList>
            <person name="Laquerriere A."/>
            <person name="Maluenda J."/>
            <person name="Camus A."/>
            <person name="Fontenas L."/>
            <person name="Dieterich K."/>
            <person name="Nolent F."/>
            <person name="Zhou J."/>
            <person name="Monnier N."/>
            <person name="Latour P."/>
            <person name="Gentil D."/>
            <person name="Heron D."/>
            <person name="Desguerres I."/>
            <person name="Landrieu P."/>
            <person name="Beneteau C."/>
            <person name="Delaporte B."/>
            <person name="Bellesme C."/>
            <person name="Baumann C."/>
            <person name="Capri Y."/>
            <person name="Goldenberg A."/>
            <person name="Lyonnet S."/>
            <person name="Bonneau D."/>
            <person name="Estournet B."/>
            <person name="Quijano-Roy S."/>
            <person name="Francannet C."/>
            <person name="Odent S."/>
            <person name="Saint-Frison M.H."/>
            <person name="Sigaudy S."/>
            <person name="Figarella-Branger D."/>
            <person name="Gelot A."/>
            <person name="Mussini J.M."/>
            <person name="Lacroix C."/>
            <person name="Drouin-Garraud V."/>
            <person name="Malinge M.C."/>
            <person name="Attie-Bitach T."/>
            <person name="Bessieres B."/>
            <person name="Bonniere M."/>
            <person name="Encha-Razavi F."/>
            <person name="Beaufrere A.M."/>
            <person name="Khung-Savatovsky S."/>
            <person name="Perez M.J."/>
            <person name="Vasiljevic A."/>
            <person name="Mercier S."/>
            <person name="Roume J."/>
            <person name="Trestard L."/>
            <person name="Saugier-Veber P."/>
            <person name="Cordier M.P."/>
            <person name="Layet V."/>
            <person name="Legendre M."/>
            <person name="Vigouroux-Castera A."/>
            <person name="Lunardi J."/>
            <person name="Bayes M."/>
            <person name="Jouk P.S."/>
            <person name="Rigonnot L."/>
            <person name="Granier M."/>
            <person name="Sternberg D."/>
            <person name="Warszawski J."/>
            <person name="Gut I."/>
            <person name="Gonzales M."/>
            <person name="Tawk M."/>
            <person name="Melki J."/>
        </authorList>
    </citation>
    <scope>INVOLVEMENT IN LCCS8</scope>
    <scope>VARIANT LCCS8 CYS-1116</scope>
</reference>
<protein>
    <recommendedName>
        <fullName>Adenylate cyclase type 6</fullName>
        <ecNumber evidence="10 11">4.6.1.1</ecNumber>
    </recommendedName>
    <alternativeName>
        <fullName>ATP pyrophosphate-lyase 6</fullName>
    </alternativeName>
    <alternativeName>
        <fullName>Adenylate cyclase type VI</fullName>
    </alternativeName>
    <alternativeName>
        <fullName evidence="13">Adenylyl cyclase 6</fullName>
    </alternativeName>
    <alternativeName>
        <fullName>Ca(2+)-inhibitable adenylyl cyclase</fullName>
    </alternativeName>
</protein>
<organism>
    <name type="scientific">Homo sapiens</name>
    <name type="common">Human</name>
    <dbReference type="NCBI Taxonomy" id="9606"/>
    <lineage>
        <taxon>Eukaryota</taxon>
        <taxon>Metazoa</taxon>
        <taxon>Chordata</taxon>
        <taxon>Craniata</taxon>
        <taxon>Vertebrata</taxon>
        <taxon>Euteleostomi</taxon>
        <taxon>Mammalia</taxon>
        <taxon>Eutheria</taxon>
        <taxon>Euarchontoglires</taxon>
        <taxon>Primates</taxon>
        <taxon>Haplorrhini</taxon>
        <taxon>Catarrhini</taxon>
        <taxon>Hominidae</taxon>
        <taxon>Homo</taxon>
    </lineage>
</organism>
<feature type="chain" id="PRO_0000195699" description="Adenylate cyclase type 6">
    <location>
        <begin position="1"/>
        <end position="1168"/>
    </location>
</feature>
<feature type="topological domain" description="Cytoplasmic" evidence="6">
    <location>
        <begin position="1"/>
        <end position="151"/>
    </location>
</feature>
<feature type="transmembrane region" description="Helical" evidence="6">
    <location>
        <begin position="152"/>
        <end position="168"/>
    </location>
</feature>
<feature type="transmembrane region" description="Helical" evidence="6">
    <location>
        <begin position="181"/>
        <end position="197"/>
    </location>
</feature>
<feature type="transmembrane region" description="Helical" evidence="6">
    <location>
        <begin position="214"/>
        <end position="230"/>
    </location>
</feature>
<feature type="transmembrane region" description="Helical" evidence="6">
    <location>
        <begin position="239"/>
        <end position="255"/>
    </location>
</feature>
<feature type="transmembrane region" description="Helical" evidence="6">
    <location>
        <begin position="259"/>
        <end position="275"/>
    </location>
</feature>
<feature type="transmembrane region" description="Helical" evidence="6">
    <location>
        <begin position="289"/>
        <end position="305"/>
    </location>
</feature>
<feature type="topological domain" description="Cytoplasmic" evidence="6">
    <location>
        <begin position="306"/>
        <end position="673"/>
    </location>
</feature>
<feature type="transmembrane region" description="Helical" evidence="6">
    <location>
        <begin position="674"/>
        <end position="691"/>
    </location>
</feature>
<feature type="transmembrane region" description="Helical" evidence="6">
    <location>
        <begin position="702"/>
        <end position="718"/>
    </location>
</feature>
<feature type="transmembrane region" description="Helical" evidence="6">
    <location>
        <begin position="743"/>
        <end position="759"/>
    </location>
</feature>
<feature type="topological domain" description="Extracellular" evidence="6">
    <location>
        <begin position="760"/>
        <end position="819"/>
    </location>
</feature>
<feature type="transmembrane region" description="Helical" evidence="6">
    <location>
        <begin position="820"/>
        <end position="836"/>
    </location>
</feature>
<feature type="transmembrane region" description="Helical" evidence="6">
    <location>
        <begin position="839"/>
        <end position="855"/>
    </location>
</feature>
<feature type="transmembrane region" description="Helical" evidence="6">
    <location>
        <begin position="897"/>
        <end position="913"/>
    </location>
</feature>
<feature type="topological domain" description="Cytoplasmic" evidence="6">
    <location>
        <begin position="914"/>
        <end position="1168"/>
    </location>
</feature>
<feature type="binding site" evidence="2">
    <location>
        <begin position="384"/>
        <end position="389"/>
    </location>
    <ligand>
        <name>ATP</name>
        <dbReference type="ChEBI" id="CHEBI:30616"/>
    </ligand>
</feature>
<feature type="binding site" evidence="7">
    <location>
        <position position="384"/>
    </location>
    <ligand>
        <name>Mg(2+)</name>
        <dbReference type="ChEBI" id="CHEBI:18420"/>
        <label>1</label>
        <note>catalytic</note>
    </ligand>
</feature>
<feature type="binding site" evidence="7">
    <location>
        <position position="384"/>
    </location>
    <ligand>
        <name>Mg(2+)</name>
        <dbReference type="ChEBI" id="CHEBI:18420"/>
        <label>2</label>
        <note>catalytic</note>
    </ligand>
</feature>
<feature type="binding site" evidence="7">
    <location>
        <position position="385"/>
    </location>
    <ligand>
        <name>Mg(2+)</name>
        <dbReference type="ChEBI" id="CHEBI:18420"/>
        <label>2</label>
        <note>catalytic</note>
    </ligand>
</feature>
<feature type="binding site" evidence="2">
    <location>
        <begin position="426"/>
        <end position="428"/>
    </location>
    <ligand>
        <name>ATP</name>
        <dbReference type="ChEBI" id="CHEBI:30616"/>
    </ligand>
</feature>
<feature type="binding site" evidence="7">
    <location>
        <position position="428"/>
    </location>
    <ligand>
        <name>Mg(2+)</name>
        <dbReference type="ChEBI" id="CHEBI:18420"/>
        <label>1</label>
        <note>catalytic</note>
    </ligand>
</feature>
<feature type="binding site" evidence="7">
    <location>
        <position position="428"/>
    </location>
    <ligand>
        <name>Mg(2+)</name>
        <dbReference type="ChEBI" id="CHEBI:18420"/>
        <label>2</label>
        <note>catalytic</note>
    </ligand>
</feature>
<feature type="binding site" evidence="2">
    <location>
        <position position="472"/>
    </location>
    <ligand>
        <name>ATP</name>
        <dbReference type="ChEBI" id="CHEBI:30616"/>
    </ligand>
</feature>
<feature type="binding site" evidence="1">
    <location>
        <position position="1031"/>
    </location>
    <ligand>
        <name>ATP</name>
        <dbReference type="ChEBI" id="CHEBI:30616"/>
    </ligand>
</feature>
<feature type="binding site" evidence="1">
    <location>
        <begin position="1105"/>
        <end position="1107"/>
    </location>
    <ligand>
        <name>ATP</name>
        <dbReference type="ChEBI" id="CHEBI:30616"/>
    </ligand>
</feature>
<feature type="binding site" evidence="1">
    <location>
        <begin position="1112"/>
        <end position="1116"/>
    </location>
    <ligand>
        <name>ATP</name>
        <dbReference type="ChEBI" id="CHEBI:30616"/>
    </ligand>
</feature>
<feature type="binding site" evidence="1">
    <location>
        <position position="1152"/>
    </location>
    <ligand>
        <name>ATP</name>
        <dbReference type="ChEBI" id="CHEBI:30616"/>
    </ligand>
</feature>
<feature type="modified residue" description="Phosphoserine" evidence="17">
    <location>
        <position position="54"/>
    </location>
</feature>
<feature type="modified residue" description="Phosphoserine" evidence="5">
    <location>
        <position position="556"/>
    </location>
</feature>
<feature type="modified residue" description="Phosphoserine" evidence="16 17">
    <location>
        <position position="576"/>
    </location>
</feature>
<feature type="modified residue" description="Phosphoserine" evidence="5">
    <location>
        <position position="662"/>
    </location>
</feature>
<feature type="modified residue" description="Phosphothreonine" evidence="5">
    <location>
        <position position="919"/>
    </location>
</feature>
<feature type="glycosylation site" description="N-linked (GlcNAc...) asparagine" evidence="6">
    <location>
        <position position="793"/>
    </location>
</feature>
<feature type="splice variant" id="VSP_000244" description="In isoform 2." evidence="14">
    <location>
        <begin position="762"/>
        <end position="814"/>
    </location>
</feature>
<feature type="sequence variant" id="VAR_048249" description="No effect on basal enzyme activity, but increased enzyme activity upon activation via G-proteins or forskolin; dbSNP:rs3730071.">
    <original>A</original>
    <variation>S</variation>
    <location>
        <position position="674"/>
    </location>
</feature>
<feature type="sequence variant" id="VAR_073434" description="In LCCS8; dbSNP:rs786204798." evidence="12">
    <original>R</original>
    <variation>C</variation>
    <location>
        <position position="1116"/>
    </location>
</feature>
<name>ADCY6_HUMAN</name>
<dbReference type="EC" id="4.6.1.1" evidence="10 11"/>
<dbReference type="EMBL" id="AF250226">
    <property type="protein sequence ID" value="AAF82478.1"/>
    <property type="molecule type" value="mRNA"/>
</dbReference>
<dbReference type="EMBL" id="AB007882">
    <property type="protein sequence ID" value="BAA24852.2"/>
    <property type="status" value="ALT_INIT"/>
    <property type="molecule type" value="mRNA"/>
</dbReference>
<dbReference type="EMBL" id="BC064923">
    <property type="status" value="NOT_ANNOTATED_CDS"/>
    <property type="molecule type" value="mRNA"/>
</dbReference>
<dbReference type="CCDS" id="CCDS8767.1">
    <molecule id="O43306-1"/>
</dbReference>
<dbReference type="CCDS" id="CCDS8768.1">
    <molecule id="O43306-2"/>
</dbReference>
<dbReference type="RefSeq" id="NP_001377759.1">
    <molecule id="O43306-2"/>
    <property type="nucleotide sequence ID" value="NM_001390830.1"/>
</dbReference>
<dbReference type="RefSeq" id="NP_001377760.1">
    <molecule id="O43306-1"/>
    <property type="nucleotide sequence ID" value="NM_001390831.2"/>
</dbReference>
<dbReference type="RefSeq" id="NP_001399748.1">
    <molecule id="O43306-1"/>
    <property type="nucleotide sequence ID" value="NM_001412819.1"/>
</dbReference>
<dbReference type="RefSeq" id="NP_001399749.1">
    <molecule id="O43306-1"/>
    <property type="nucleotide sequence ID" value="NM_001412820.1"/>
</dbReference>
<dbReference type="RefSeq" id="NP_001399750.1">
    <molecule id="O43306-1"/>
    <property type="nucleotide sequence ID" value="NM_001412821.1"/>
</dbReference>
<dbReference type="RefSeq" id="NP_001399751.1">
    <molecule id="O43306-1"/>
    <property type="nucleotide sequence ID" value="NM_001412822.1"/>
</dbReference>
<dbReference type="RefSeq" id="NP_056085.1">
    <molecule id="O43306-1"/>
    <property type="nucleotide sequence ID" value="NM_015270.5"/>
</dbReference>
<dbReference type="RefSeq" id="XP_006719273.1">
    <molecule id="O43306-1"/>
    <property type="nucleotide sequence ID" value="XM_006719210.5"/>
</dbReference>
<dbReference type="RefSeq" id="XP_047284129.1">
    <molecule id="O43306-1"/>
    <property type="nucleotide sequence ID" value="XM_047428173.1"/>
</dbReference>
<dbReference type="RefSeq" id="XP_054226875.1">
    <molecule id="O43306-1"/>
    <property type="nucleotide sequence ID" value="XM_054370900.1"/>
</dbReference>
<dbReference type="RefSeq" id="XP_054226876.1">
    <molecule id="O43306-1"/>
    <property type="nucleotide sequence ID" value="XM_054370901.1"/>
</dbReference>
<dbReference type="SMR" id="O43306"/>
<dbReference type="BioGRID" id="106625">
    <property type="interactions" value="58"/>
</dbReference>
<dbReference type="FunCoup" id="O43306">
    <property type="interactions" value="2471"/>
</dbReference>
<dbReference type="IntAct" id="O43306">
    <property type="interactions" value="43"/>
</dbReference>
<dbReference type="MINT" id="O43306"/>
<dbReference type="STRING" id="9606.ENSP00000311405"/>
<dbReference type="BindingDB" id="O43306"/>
<dbReference type="ChEMBL" id="CHEMBL2097167"/>
<dbReference type="DrugBank" id="DB02587">
    <property type="generic name" value="Colforsin"/>
</dbReference>
<dbReference type="GuidetoPHARMACOLOGY" id="1283"/>
<dbReference type="GlyCosmos" id="O43306">
    <property type="glycosylation" value="1 site, No reported glycans"/>
</dbReference>
<dbReference type="GlyGen" id="O43306">
    <property type="glycosylation" value="3 sites, 1 N-linked glycan (1 site)"/>
</dbReference>
<dbReference type="iPTMnet" id="O43306"/>
<dbReference type="PhosphoSitePlus" id="O43306"/>
<dbReference type="SwissPalm" id="O43306"/>
<dbReference type="BioMuta" id="ADCY6"/>
<dbReference type="jPOST" id="O43306"/>
<dbReference type="MassIVE" id="O43306"/>
<dbReference type="PaxDb" id="9606-ENSP00000311405"/>
<dbReference type="PeptideAtlas" id="O43306"/>
<dbReference type="ProteomicsDB" id="48880">
    <molecule id="O43306-1"/>
</dbReference>
<dbReference type="ProteomicsDB" id="48881">
    <molecule id="O43306-2"/>
</dbReference>
<dbReference type="Pumba" id="O43306"/>
<dbReference type="Antibodypedia" id="4336">
    <property type="antibodies" value="188 antibodies from 27 providers"/>
</dbReference>
<dbReference type="DNASU" id="112"/>
<dbReference type="Ensembl" id="ENST00000307885.4">
    <molecule id="O43306-1"/>
    <property type="protein sequence ID" value="ENSP00000311405.4"/>
    <property type="gene ID" value="ENSG00000174233.12"/>
</dbReference>
<dbReference type="Ensembl" id="ENST00000357869.8">
    <molecule id="O43306-1"/>
    <property type="protein sequence ID" value="ENSP00000350536.4"/>
    <property type="gene ID" value="ENSG00000174233.12"/>
</dbReference>
<dbReference type="Ensembl" id="ENST00000550422.5">
    <molecule id="O43306-2"/>
    <property type="protein sequence ID" value="ENSP00000446730.1"/>
    <property type="gene ID" value="ENSG00000174233.12"/>
</dbReference>
<dbReference type="GeneID" id="112"/>
<dbReference type="KEGG" id="hsa:112"/>
<dbReference type="MANE-Select" id="ENST00000357869.8">
    <property type="protein sequence ID" value="ENSP00000350536.4"/>
    <property type="RefSeq nucleotide sequence ID" value="NM_015270.5"/>
    <property type="RefSeq protein sequence ID" value="NP_056085.1"/>
</dbReference>
<dbReference type="UCSC" id="uc001rsh.5">
    <molecule id="O43306-1"/>
    <property type="organism name" value="human"/>
</dbReference>
<dbReference type="AGR" id="HGNC:237"/>
<dbReference type="CTD" id="112"/>
<dbReference type="DisGeNET" id="112"/>
<dbReference type="GeneCards" id="ADCY6"/>
<dbReference type="HGNC" id="HGNC:237">
    <property type="gene designation" value="ADCY6"/>
</dbReference>
<dbReference type="HPA" id="ENSG00000174233">
    <property type="expression patterns" value="Low tissue specificity"/>
</dbReference>
<dbReference type="MalaCards" id="ADCY6"/>
<dbReference type="MIM" id="600294">
    <property type="type" value="gene"/>
</dbReference>
<dbReference type="MIM" id="616287">
    <property type="type" value="phenotype"/>
</dbReference>
<dbReference type="neXtProt" id="NX_O43306"/>
<dbReference type="OpenTargets" id="ENSG00000174233"/>
<dbReference type="Orphanet" id="2680">
    <property type="disease" value="Hypomyelination neuropathy-arthrogryposis syndrome"/>
</dbReference>
<dbReference type="PharmGKB" id="PA27"/>
<dbReference type="VEuPathDB" id="HostDB:ENSG00000174233"/>
<dbReference type="eggNOG" id="KOG3619">
    <property type="taxonomic scope" value="Eukaryota"/>
</dbReference>
<dbReference type="GeneTree" id="ENSGT00940000155687"/>
<dbReference type="HOGENOM" id="CLU_001072_2_0_1"/>
<dbReference type="InParanoid" id="O43306"/>
<dbReference type="OMA" id="CEGTMPT"/>
<dbReference type="OrthoDB" id="2107370at2759"/>
<dbReference type="PAN-GO" id="O43306">
    <property type="GO annotations" value="5 GO annotations based on evolutionary models"/>
</dbReference>
<dbReference type="PhylomeDB" id="O43306"/>
<dbReference type="TreeFam" id="TF313845"/>
<dbReference type="PathwayCommons" id="O43306"/>
<dbReference type="Reactome" id="R-HSA-163359">
    <property type="pathway name" value="Glucagon signaling in metabolic regulation"/>
</dbReference>
<dbReference type="Reactome" id="R-HSA-163615">
    <property type="pathway name" value="PKA activation"/>
</dbReference>
<dbReference type="Reactome" id="R-HSA-164378">
    <property type="pathway name" value="PKA activation in glucagon signalling"/>
</dbReference>
<dbReference type="Reactome" id="R-HSA-170660">
    <property type="pathway name" value="Adenylate cyclase activating pathway"/>
</dbReference>
<dbReference type="Reactome" id="R-HSA-170670">
    <property type="pathway name" value="Adenylate cyclase inhibitory pathway"/>
</dbReference>
<dbReference type="Reactome" id="R-HSA-381676">
    <property type="pathway name" value="Glucagon-like Peptide-1 (GLP1) regulates insulin secretion"/>
</dbReference>
<dbReference type="Reactome" id="R-HSA-400042">
    <property type="pathway name" value="Adrenaline,noradrenaline inhibits insulin secretion"/>
</dbReference>
<dbReference type="Reactome" id="R-HSA-418555">
    <property type="pathway name" value="G alpha (s) signalling events"/>
</dbReference>
<dbReference type="Reactome" id="R-HSA-418594">
    <property type="pathway name" value="G alpha (i) signalling events"/>
</dbReference>
<dbReference type="Reactome" id="R-HSA-418597">
    <property type="pathway name" value="G alpha (z) signalling events"/>
</dbReference>
<dbReference type="Reactome" id="R-HSA-432040">
    <property type="pathway name" value="Vasopressin regulates renal water homeostasis via Aquaporins"/>
</dbReference>
<dbReference type="Reactome" id="R-HSA-5610787">
    <property type="pathway name" value="Hedgehog 'off' state"/>
</dbReference>
<dbReference type="Reactome" id="R-HSA-9634597">
    <property type="pathway name" value="GPER1 signaling"/>
</dbReference>
<dbReference type="Reactome" id="R-HSA-9660821">
    <property type="pathway name" value="ADORA2B mediated anti-inflammatory cytokines production"/>
</dbReference>
<dbReference type="Reactome" id="R-HSA-9664323">
    <property type="pathway name" value="FCGR3A-mediated IL10 synthesis"/>
</dbReference>
<dbReference type="Reactome" id="R-HSA-9856530">
    <property type="pathway name" value="High laminar flow shear stress activates signaling by PIEZO1 and PECAM1:CDH5:KDR in endothelial cells"/>
</dbReference>
<dbReference type="SignaLink" id="O43306"/>
<dbReference type="SIGNOR" id="O43306"/>
<dbReference type="BioGRID-ORCS" id="112">
    <property type="hits" value="20 hits in 1152 CRISPR screens"/>
</dbReference>
<dbReference type="CD-CODE" id="232F8A39">
    <property type="entry name" value="P-body"/>
</dbReference>
<dbReference type="ChiTaRS" id="ADCY6">
    <property type="organism name" value="human"/>
</dbReference>
<dbReference type="GeneWiki" id="ADCY6"/>
<dbReference type="GenomeRNAi" id="112"/>
<dbReference type="Pharos" id="O43306">
    <property type="development level" value="Tchem"/>
</dbReference>
<dbReference type="PRO" id="PR:O43306"/>
<dbReference type="Proteomes" id="UP000005640">
    <property type="component" value="Chromosome 12"/>
</dbReference>
<dbReference type="RNAct" id="O43306">
    <property type="molecule type" value="protein"/>
</dbReference>
<dbReference type="Bgee" id="ENSG00000174233">
    <property type="expression patterns" value="Expressed in apex of heart and 129 other cell types or tissues"/>
</dbReference>
<dbReference type="ExpressionAtlas" id="O43306">
    <property type="expression patterns" value="baseline and differential"/>
</dbReference>
<dbReference type="GO" id="GO:0005929">
    <property type="term" value="C:cilium"/>
    <property type="evidence" value="ECO:0007669"/>
    <property type="project" value="UniProtKB-SubCell"/>
</dbReference>
<dbReference type="GO" id="GO:0016020">
    <property type="term" value="C:membrane"/>
    <property type="evidence" value="ECO:0000250"/>
    <property type="project" value="BHF-UCL"/>
</dbReference>
<dbReference type="GO" id="GO:0005886">
    <property type="term" value="C:plasma membrane"/>
    <property type="evidence" value="ECO:0000250"/>
    <property type="project" value="UniProtKB"/>
</dbReference>
<dbReference type="GO" id="GO:0032420">
    <property type="term" value="C:stereocilium"/>
    <property type="evidence" value="ECO:0007669"/>
    <property type="project" value="UniProtKB-SubCell"/>
</dbReference>
<dbReference type="GO" id="GO:0004016">
    <property type="term" value="F:adenylate cyclase activity"/>
    <property type="evidence" value="ECO:0000314"/>
    <property type="project" value="UniProtKB"/>
</dbReference>
<dbReference type="GO" id="GO:0005524">
    <property type="term" value="F:ATP binding"/>
    <property type="evidence" value="ECO:0007669"/>
    <property type="project" value="UniProtKB-KW"/>
</dbReference>
<dbReference type="GO" id="GO:0046872">
    <property type="term" value="F:metal ion binding"/>
    <property type="evidence" value="ECO:0007669"/>
    <property type="project" value="UniProtKB-KW"/>
</dbReference>
<dbReference type="GO" id="GO:0019901">
    <property type="term" value="F:protein kinase binding"/>
    <property type="evidence" value="ECO:0000250"/>
    <property type="project" value="BHF-UCL"/>
</dbReference>
<dbReference type="GO" id="GO:0005080">
    <property type="term" value="F:protein kinase C binding"/>
    <property type="evidence" value="ECO:0000314"/>
    <property type="project" value="UniProtKB"/>
</dbReference>
<dbReference type="GO" id="GO:0007191">
    <property type="term" value="P:adenylate cyclase-activating dopamine receptor signaling pathway"/>
    <property type="evidence" value="ECO:0000314"/>
    <property type="project" value="BHF-UCL"/>
</dbReference>
<dbReference type="GO" id="GO:0007189">
    <property type="term" value="P:adenylate cyclase-activating G protein-coupled receptor signaling pathway"/>
    <property type="evidence" value="ECO:0000314"/>
    <property type="project" value="UniProtKB"/>
</dbReference>
<dbReference type="GO" id="GO:0007192">
    <property type="term" value="P:adenylate cyclase-activating serotonin receptor signaling pathway"/>
    <property type="evidence" value="ECO:0000314"/>
    <property type="project" value="UniProt"/>
</dbReference>
<dbReference type="GO" id="GO:0007193">
    <property type="term" value="P:adenylate cyclase-inhibiting G protein-coupled receptor signaling pathway"/>
    <property type="evidence" value="ECO:0000250"/>
    <property type="project" value="UniProt"/>
</dbReference>
<dbReference type="GO" id="GO:0007198">
    <property type="term" value="P:adenylate cyclase-inhibiting serotonin receptor signaling pathway"/>
    <property type="evidence" value="ECO:0000250"/>
    <property type="project" value="UniProt"/>
</dbReference>
<dbReference type="GO" id="GO:0097746">
    <property type="term" value="P:blood vessel diameter maintenance"/>
    <property type="evidence" value="ECO:0000315"/>
    <property type="project" value="UniProtKB"/>
</dbReference>
<dbReference type="GO" id="GO:0006171">
    <property type="term" value="P:cAMP biosynthetic process"/>
    <property type="evidence" value="ECO:0000314"/>
    <property type="project" value="UniProtKB"/>
</dbReference>
<dbReference type="GO" id="GO:0071870">
    <property type="term" value="P:cellular response to catecholamine stimulus"/>
    <property type="evidence" value="ECO:0000314"/>
    <property type="project" value="BHF-UCL"/>
</dbReference>
<dbReference type="GO" id="GO:1904322">
    <property type="term" value="P:cellular response to forskolin"/>
    <property type="evidence" value="ECO:0000314"/>
    <property type="project" value="UniProtKB"/>
</dbReference>
<dbReference type="GO" id="GO:0071380">
    <property type="term" value="P:cellular response to prostaglandin E stimulus"/>
    <property type="evidence" value="ECO:0000314"/>
    <property type="project" value="BHF-UCL"/>
</dbReference>
<dbReference type="GO" id="GO:1904117">
    <property type="term" value="P:cellular response to vasopressin"/>
    <property type="evidence" value="ECO:0000250"/>
    <property type="project" value="UniProtKB"/>
</dbReference>
<dbReference type="GO" id="GO:0035556">
    <property type="term" value="P:intracellular signal transduction"/>
    <property type="evidence" value="ECO:0007669"/>
    <property type="project" value="InterPro"/>
</dbReference>
<dbReference type="GO" id="GO:0010977">
    <property type="term" value="P:negative regulation of neuron projection development"/>
    <property type="evidence" value="ECO:0000250"/>
    <property type="project" value="ParkinsonsUK-UCL"/>
</dbReference>
<dbReference type="GO" id="GO:0035811">
    <property type="term" value="P:negative regulation of urine volume"/>
    <property type="evidence" value="ECO:0000250"/>
    <property type="project" value="UniProtKB"/>
</dbReference>
<dbReference type="GO" id="GO:0003091">
    <property type="term" value="P:renal water homeostasis"/>
    <property type="evidence" value="ECO:0000250"/>
    <property type="project" value="UniProtKB"/>
</dbReference>
<dbReference type="CDD" id="cd07302">
    <property type="entry name" value="CHD"/>
    <property type="match status" value="2"/>
</dbReference>
<dbReference type="FunFam" id="3.30.70.1230:FF:000001">
    <property type="entry name" value="Adenylate cyclase"/>
    <property type="match status" value="1"/>
</dbReference>
<dbReference type="FunFam" id="3.30.70.1230:FF:000002">
    <property type="entry name" value="Adenylate cyclase"/>
    <property type="match status" value="1"/>
</dbReference>
<dbReference type="Gene3D" id="3.30.70.1230">
    <property type="entry name" value="Nucleotide cyclase"/>
    <property type="match status" value="2"/>
</dbReference>
<dbReference type="InterPro" id="IPR001054">
    <property type="entry name" value="A/G_cyclase"/>
</dbReference>
<dbReference type="InterPro" id="IPR018297">
    <property type="entry name" value="A/G_cyclase_CS"/>
</dbReference>
<dbReference type="InterPro" id="IPR032628">
    <property type="entry name" value="AC_N"/>
</dbReference>
<dbReference type="InterPro" id="IPR030672">
    <property type="entry name" value="Adcy"/>
</dbReference>
<dbReference type="InterPro" id="IPR009398">
    <property type="entry name" value="Adcy_conserved_dom"/>
</dbReference>
<dbReference type="InterPro" id="IPR029787">
    <property type="entry name" value="Nucleotide_cyclase"/>
</dbReference>
<dbReference type="PANTHER" id="PTHR45627">
    <property type="entry name" value="ADENYLATE CYCLASE TYPE 1"/>
    <property type="match status" value="1"/>
</dbReference>
<dbReference type="PANTHER" id="PTHR45627:SF11">
    <property type="entry name" value="ADENYLATE CYCLASE TYPE 6"/>
    <property type="match status" value="1"/>
</dbReference>
<dbReference type="Pfam" id="PF16214">
    <property type="entry name" value="AC_N"/>
    <property type="match status" value="1"/>
</dbReference>
<dbReference type="Pfam" id="PF06327">
    <property type="entry name" value="Adcy_cons_dom"/>
    <property type="match status" value="1"/>
</dbReference>
<dbReference type="Pfam" id="PF00211">
    <property type="entry name" value="Guanylate_cyc"/>
    <property type="match status" value="2"/>
</dbReference>
<dbReference type="PIRSF" id="PIRSF039050">
    <property type="entry name" value="Ade_cyc"/>
    <property type="match status" value="1"/>
</dbReference>
<dbReference type="SMART" id="SM00044">
    <property type="entry name" value="CYCc"/>
    <property type="match status" value="2"/>
</dbReference>
<dbReference type="SUPFAM" id="SSF55073">
    <property type="entry name" value="Nucleotide cyclase"/>
    <property type="match status" value="2"/>
</dbReference>
<dbReference type="PROSITE" id="PS00452">
    <property type="entry name" value="GUANYLATE_CYCLASE_1"/>
    <property type="match status" value="2"/>
</dbReference>
<dbReference type="PROSITE" id="PS50125">
    <property type="entry name" value="GUANYLATE_CYCLASE_2"/>
    <property type="match status" value="2"/>
</dbReference>
<sequence>MSWFSGLLVPKVDERKTAWGERNGQKRSRRRGTRAGGFCTPRYMSCLRDAEPPSPTPAGPPRCPWQDDAFIRRGGPGKGKELGLRAVALGFEDTEVTTTAGGTAEVAPDAVPRSGRSCWRRLVQVFQSKQFRSAKLERLYQRYFFQMNQSSLTLLMAVLVLLTAVLLAFHAAPARPQPAYVALLACAAALFVGLMVVCNRHSFRQDSMWVVSYVVLGILAAVQVGGALAADPRSPSAGLWCPVFFVYIAYTLLPIRMRAAVLSGLGLSTLHLILAWQLNRGDAFLWKQLGANVLLFLCTNVIGICTHYPAEVSQRQAFQETRGYIQARLHLQHENRQQERLLLSVLPQHVAMEMKEDINTKKEDMMFHKIYIQKHDNVSILFADIEGFTSLASQCTAQELVMTLNELFARFDKLAAENHCLRIKILGDCYYCVSGLPEARADHAHCCVEMGVDMIEAISLVREVTGVNVNMRVGIHSGRVHCGVLGLRKWQFDVWSNDVTLANHMEAGGRAGRIHITRATLQYLNGDYEVEPGRGGERNAYLKEQHIETFLILGASQKRKEEKAMLAKLQRTRANSMEGLMPRWVPDRAFSRTKDSKAFRQMGIDDSSKDNRGTQDALNPEDEVDEFLSRAIDARSIDQLRKDHVRRFLLTFQREDLEKKYSRKVDPRFGAYVACALLVFCFICFIQLLIFPHSTLMLGIYASIFLLLLITVLICAVYSCGSLFPKALQRLSRSIVRSRAHSTAVGIFSVLLVFTSAIANMFTCNHTPIRSCAARMLNLTPADITACHLQQLNYSLGLDAPLCEGTMPTCSFPEYFIGNMLLSLLASSVFLHISSIGKLAMIFVLGLIYLVLLLLGPPATIFDNYDLLLGVHGLASSNETFDGLDCPAAGRVALKYMTPVILLVFALALYLHAQQVESTARLDFLWKLQATGEKEEMEELQAYNRRLLHNILPKDVAAHFLARERRNDELYYQSCECVAVMFASIANFSEFYVELEANNEGVECLRLLNEIIADFDEIISEERFRQLEKIKTIGSTYMAASGLNASTYDQVGRSHITALADYAMRLMEQMKHINEHSFNNFQMKIGLNMGPVVAGVIGARKPQYDIWGNTVNVSSRMDSTGVPDRIQVTTDLYQVLAAKGYQLECRGVVKVKGKGEMTTYFLNGGPSS</sequence>
<comment type="function">
    <text evidence="4 5 10 11">Catalyzes the formation of the signaling molecule cAMP downstream of G protein-coupled receptors (PubMed:17110384, PubMed:17916776). Functions in signaling cascades downstream of beta-adrenergic receptors in the heart and in vascular smooth muscle cells (PubMed:17916776). Functions in signaling cascades downstream of the vasopressin receptor in the kidney and has a role in renal water reabsorption. Functions in signaling cascades downstream of PTH1R and plays a role in regulating renal phosphate excretion. Functions in signaling cascades downstream of the VIP and SCT receptors in pancreas and contributes to the regulation of pancreatic amylase and fluid secretion (By similarity). Signaling mediates cAMP-dependent activation of protein kinase PKA. This promotes increased phosphorylation of various proteins, including AKT. Plays a role in regulating cardiac sarcoplasmic reticulum Ca(2+) uptake and storage, and is required for normal heart ventricular contractibility. May contribute to normal heart function (By similarity). Mediates vasodilatation after activation of beta-adrenergic receptors by isoproterenol (PubMed:17916776). Contributes to bone cell responses to mechanical stimuli (By similarity).</text>
</comment>
<comment type="catalytic activity">
    <reaction evidence="10 11">
        <text>ATP = 3',5'-cyclic AMP + diphosphate</text>
        <dbReference type="Rhea" id="RHEA:15389"/>
        <dbReference type="ChEBI" id="CHEBI:30616"/>
        <dbReference type="ChEBI" id="CHEBI:33019"/>
        <dbReference type="ChEBI" id="CHEBI:58165"/>
        <dbReference type="EC" id="4.6.1.1"/>
    </reaction>
</comment>
<comment type="cofactor">
    <cofactor evidence="9">
        <name>Mg(2+)</name>
        <dbReference type="ChEBI" id="CHEBI:18420"/>
    </cofactor>
    <cofactor evidence="9">
        <name>Mn(2+)</name>
        <dbReference type="ChEBI" id="CHEBI:29035"/>
    </cofactor>
    <text evidence="2">Binds 2 magnesium ions per subunit. Is also active with manganese (in vitro).</text>
</comment>
<comment type="activity regulation">
    <text evidence="3 4 5 10 11">Activated by G(s) G alpha protein GNAS (By similarity). Inhibited by G(i) G alpha protein GNAI1 (By similarity). Is further activated by the complex formed by GNB1 and GNG2 (PubMed:17110384). Activated by forskolin (PubMed:17110384, PubMed:17916776). Inhibited by calcium ions, already at micromolar concentrations (By similarity). Inhibited by adenosine, AMP and their analogs (By similarity). Phosphorylation by RAF1 results in its activation (By similarity).</text>
</comment>
<comment type="subunit">
    <text evidence="4 9 10">Part of a complex containing AKAP5, ADCY5, PDE4C and PKD2 (By similarity). Interacts with RAF1 (PubMed:15385642). Interacts (via cytoplasmic N-terminus) with GNAS, GNB1 and GNG2 (PubMed:17110384).</text>
</comment>
<comment type="subcellular location">
    <subcellularLocation>
        <location evidence="10">Cell membrane</location>
        <topology evidence="15">Multi-pass membrane protein</topology>
    </subcellularLocation>
    <subcellularLocation>
        <location evidence="4">Cell projection</location>
        <location evidence="4">Cilium</location>
    </subcellularLocation>
    <subcellularLocation>
        <location evidence="4">Cell projection</location>
        <location evidence="4">Stereocilium</location>
    </subcellularLocation>
</comment>
<comment type="alternative products">
    <event type="alternative splicing"/>
    <isoform>
        <id>O43306-1</id>
        <name>1</name>
        <sequence type="displayed"/>
    </isoform>
    <isoform>
        <id>O43306-2</id>
        <name>2</name>
        <sequence type="described" ref="VSP_000244"/>
    </isoform>
</comment>
<comment type="tissue specificity">
    <text evidence="8">Detected in peripheral blood mononuclear leukocytes (at protein level) (PubMed:17916776). Detected in thyroid (PubMed:10978539).</text>
</comment>
<comment type="domain">
    <text evidence="1">The protein contains two modules with six transmembrane helices each; both are required for catalytic activity. Isolated N-terminal or C-terminal guanylate cyclase domains have no catalytic activity, but when they are brought together, enzyme activity is restored. The active site is at the interface of the two domains. Both contribute substrate-binding residues, but the catalytic metal ions are bound exclusively via the N-terminal guanylate cyclase domain.</text>
</comment>
<comment type="PTM">
    <text evidence="5">Phosphorylation by RAF1 increases enzyme activity. Phosphorylation by PKA at Ser-662 inhibits the GNAS-mediated increase in catalytic activity. Phosphorylation by PKC at Ser-556, Ser-662 and Thr-919 inhibits catalytic activity.</text>
</comment>
<comment type="disease" evidence="12">
    <disease id="DI-04380">
        <name>Lethal congenital contracture syndrome 8</name>
        <acronym>LCCS8</acronym>
        <description>A form of lethal congenital contracture syndrome, an autosomal recessive disorder characterized by degeneration of anterior horn neurons, extreme skeletal muscle atrophy and congenital non-progressive joint contractures. The contractures can involve the upper or lower limbs and/or the vertebral column, leading to various degrees of flexion or extension limitations evident at birth. LCCS8 is an axoglial form of arthrogryposis multiplex congenita, characterized by congenital distal joint contractures, reduced fetal movements, and severe motor paralysis leading to death early in the neonatal period.</description>
        <dbReference type="MIM" id="616287"/>
    </disease>
    <text>The disease is caused by variants affecting the gene represented in this entry.</text>
</comment>
<comment type="similarity">
    <text evidence="7">Belongs to the adenylyl cyclase class-4/guanylyl cyclase family.</text>
</comment>
<comment type="sequence caution" evidence="15">
    <conflict type="erroneous initiation">
        <sequence resource="EMBL-CDS" id="BAA24852"/>
    </conflict>
    <text>Extended N-terminus.</text>
</comment>